<gene>
    <name evidence="1" type="primary">psbL</name>
</gene>
<evidence type="ECO:0000255" key="1">
    <source>
        <dbReference type="HAMAP-Rule" id="MF_01317"/>
    </source>
</evidence>
<geneLocation type="chloroplast"/>
<keyword id="KW-0150">Chloroplast</keyword>
<keyword id="KW-0472">Membrane</keyword>
<keyword id="KW-0602">Photosynthesis</keyword>
<keyword id="KW-0604">Photosystem II</keyword>
<keyword id="KW-0934">Plastid</keyword>
<keyword id="KW-0674">Reaction center</keyword>
<keyword id="KW-0793">Thylakoid</keyword>
<keyword id="KW-0812">Transmembrane</keyword>
<keyword id="KW-1133">Transmembrane helix</keyword>
<name>PSBL_ILLPA</name>
<protein>
    <recommendedName>
        <fullName evidence="1">Photosystem II reaction center protein L</fullName>
        <shortName evidence="1">PSII-L</shortName>
    </recommendedName>
</protein>
<sequence length="38" mass="4497">MTQSNPNEQNVELNRTSLYWGLLLIFVLAVLFSNYFFN</sequence>
<accession>Q7J1A8</accession>
<comment type="function">
    <text evidence="1">One of the components of the core complex of photosystem II (PSII). PSII is a light-driven water:plastoquinone oxidoreductase that uses light energy to abstract electrons from H(2)O, generating O(2) and a proton gradient subsequently used for ATP formation. It consists of a core antenna complex that captures photons, and an electron transfer chain that converts photonic excitation into a charge separation. This subunit is found at the monomer-monomer interface and is required for correct PSII assembly and/or dimerization.</text>
</comment>
<comment type="subunit">
    <text evidence="1">PSII is composed of 1 copy each of membrane proteins PsbA, PsbB, PsbC, PsbD, PsbE, PsbF, PsbH, PsbI, PsbJ, PsbK, PsbL, PsbM, PsbT, PsbX, PsbY, PsbZ, Psb30/Ycf12, at least 3 peripheral proteins of the oxygen-evolving complex and a large number of cofactors. It forms dimeric complexes.</text>
</comment>
<comment type="subcellular location">
    <subcellularLocation>
        <location evidence="1">Plastid</location>
        <location evidence="1">Chloroplast thylakoid membrane</location>
        <topology evidence="1">Single-pass membrane protein</topology>
    </subcellularLocation>
</comment>
<comment type="similarity">
    <text evidence="1">Belongs to the PsbL family.</text>
</comment>
<organism>
    <name type="scientific">Illicium parviflorum</name>
    <name type="common">Yellow anise tree</name>
    <name type="synonym">Badianifera parviflora</name>
    <dbReference type="NCBI Taxonomy" id="13099"/>
    <lineage>
        <taxon>Eukaryota</taxon>
        <taxon>Viridiplantae</taxon>
        <taxon>Streptophyta</taxon>
        <taxon>Embryophyta</taxon>
        <taxon>Tracheophyta</taxon>
        <taxon>Spermatophyta</taxon>
        <taxon>Magnoliopsida</taxon>
        <taxon>Austrobaileyales</taxon>
        <taxon>Schisandraceae</taxon>
        <taxon>Illicium</taxon>
    </lineage>
</organism>
<proteinExistence type="inferred from homology"/>
<dbReference type="EMBL" id="AF123838">
    <property type="protein sequence ID" value="AAG26232.1"/>
    <property type="molecule type" value="Genomic_DNA"/>
</dbReference>
<dbReference type="SMR" id="Q7J1A8"/>
<dbReference type="GO" id="GO:0009535">
    <property type="term" value="C:chloroplast thylakoid membrane"/>
    <property type="evidence" value="ECO:0007669"/>
    <property type="project" value="UniProtKB-SubCell"/>
</dbReference>
<dbReference type="GO" id="GO:0009539">
    <property type="term" value="C:photosystem II reaction center"/>
    <property type="evidence" value="ECO:0007669"/>
    <property type="project" value="InterPro"/>
</dbReference>
<dbReference type="GO" id="GO:0015979">
    <property type="term" value="P:photosynthesis"/>
    <property type="evidence" value="ECO:0007669"/>
    <property type="project" value="UniProtKB-UniRule"/>
</dbReference>
<dbReference type="HAMAP" id="MF_01317">
    <property type="entry name" value="PSII_PsbL"/>
    <property type="match status" value="1"/>
</dbReference>
<dbReference type="InterPro" id="IPR003372">
    <property type="entry name" value="PSII_PsbL"/>
</dbReference>
<dbReference type="InterPro" id="IPR037266">
    <property type="entry name" value="PSII_PsbL_sf"/>
</dbReference>
<dbReference type="NCBIfam" id="NF001972">
    <property type="entry name" value="PRK00753.1"/>
    <property type="match status" value="1"/>
</dbReference>
<dbReference type="Pfam" id="PF02419">
    <property type="entry name" value="PsbL"/>
    <property type="match status" value="1"/>
</dbReference>
<dbReference type="SUPFAM" id="SSF161017">
    <property type="entry name" value="Photosystem II reaction center protein L, PsbL"/>
    <property type="match status" value="1"/>
</dbReference>
<reference key="1">
    <citation type="journal article" date="2000" name="Am. J. Bot.">
        <title>Utility of 17 chloroplast genes for inferring the phylogeny of the basal angiosperms.</title>
        <authorList>
            <person name="Graham S.W."/>
            <person name="Olmstead R.G."/>
        </authorList>
    </citation>
    <scope>NUCLEOTIDE SEQUENCE [GENOMIC DNA]</scope>
</reference>
<feature type="chain" id="PRO_0000219724" description="Photosystem II reaction center protein L">
    <location>
        <begin position="1"/>
        <end position="38"/>
    </location>
</feature>
<feature type="transmembrane region" description="Helical" evidence="1">
    <location>
        <begin position="17"/>
        <end position="37"/>
    </location>
</feature>